<feature type="chain" id="PRO_0000135596" description="Nascent polypeptide-associated complex protein">
    <location>
        <begin position="1"/>
        <end position="109"/>
    </location>
</feature>
<feature type="domain" description="NAC-A/B" evidence="1">
    <location>
        <begin position="3"/>
        <end position="70"/>
    </location>
</feature>
<proteinExistence type="inferred from homology"/>
<evidence type="ECO:0000255" key="1">
    <source>
        <dbReference type="HAMAP-Rule" id="MF_00814"/>
    </source>
</evidence>
<organism>
    <name type="scientific">Archaeoglobus fulgidus (strain ATCC 49558 / DSM 4304 / JCM 9628 / NBRC 100126 / VC-16)</name>
    <dbReference type="NCBI Taxonomy" id="224325"/>
    <lineage>
        <taxon>Archaea</taxon>
        <taxon>Methanobacteriati</taxon>
        <taxon>Methanobacteriota</taxon>
        <taxon>Archaeoglobi</taxon>
        <taxon>Archaeoglobales</taxon>
        <taxon>Archaeoglobaceae</taxon>
        <taxon>Archaeoglobus</taxon>
    </lineage>
</organism>
<name>NAC_ARCFU</name>
<gene>
    <name evidence="1" type="primary">nac</name>
    <name type="ordered locus">AF_0215</name>
</gene>
<dbReference type="EMBL" id="AE000782">
    <property type="protein sequence ID" value="AAB91018.1"/>
    <property type="molecule type" value="Genomic_DNA"/>
</dbReference>
<dbReference type="PIR" id="G69276">
    <property type="entry name" value="G69276"/>
</dbReference>
<dbReference type="RefSeq" id="WP_010877726.1">
    <property type="nucleotide sequence ID" value="NC_000917.1"/>
</dbReference>
<dbReference type="SMR" id="O30024"/>
<dbReference type="STRING" id="224325.AF_0215"/>
<dbReference type="PaxDb" id="224325-AF_0215"/>
<dbReference type="EnsemblBacteria" id="AAB91018">
    <property type="protein sequence ID" value="AAB91018"/>
    <property type="gene ID" value="AF_0215"/>
</dbReference>
<dbReference type="KEGG" id="afu:AF_0215"/>
<dbReference type="eggNOG" id="arCOG04061">
    <property type="taxonomic scope" value="Archaea"/>
</dbReference>
<dbReference type="HOGENOM" id="CLU_146475_0_0_2"/>
<dbReference type="OrthoDB" id="50104at2157"/>
<dbReference type="PhylomeDB" id="O30024"/>
<dbReference type="Proteomes" id="UP000002199">
    <property type="component" value="Chromosome"/>
</dbReference>
<dbReference type="GO" id="GO:0003723">
    <property type="term" value="F:RNA binding"/>
    <property type="evidence" value="ECO:0007669"/>
    <property type="project" value="UniProtKB-UniRule"/>
</dbReference>
<dbReference type="GO" id="GO:0015031">
    <property type="term" value="P:protein transport"/>
    <property type="evidence" value="ECO:0007669"/>
    <property type="project" value="UniProtKB-UniRule"/>
</dbReference>
<dbReference type="CDD" id="cd14359">
    <property type="entry name" value="UBA_AeNAC"/>
    <property type="match status" value="1"/>
</dbReference>
<dbReference type="Gene3D" id="1.10.8.10">
    <property type="entry name" value="DNA helicase RuvA subunit, C-terminal domain"/>
    <property type="match status" value="1"/>
</dbReference>
<dbReference type="Gene3D" id="2.20.70.30">
    <property type="entry name" value="Nascent polypeptide-associated complex domain"/>
    <property type="match status" value="1"/>
</dbReference>
<dbReference type="HAMAP" id="MF_00814">
    <property type="entry name" value="NAC_arch"/>
    <property type="match status" value="1"/>
</dbReference>
<dbReference type="InterPro" id="IPR044034">
    <property type="entry name" value="NAC-like_UBA"/>
</dbReference>
<dbReference type="InterPro" id="IPR038187">
    <property type="entry name" value="NAC_A/B_dom_sf"/>
</dbReference>
<dbReference type="InterPro" id="IPR005231">
    <property type="entry name" value="NAC_arc"/>
</dbReference>
<dbReference type="InterPro" id="IPR002715">
    <property type="entry name" value="Nas_poly-pep-assoc_cplx_dom"/>
</dbReference>
<dbReference type="InterPro" id="IPR009060">
    <property type="entry name" value="UBA-like_sf"/>
</dbReference>
<dbReference type="NCBIfam" id="TIGR00264">
    <property type="entry name" value="archaeal-type nascent polypeptide-associated complex protein"/>
    <property type="match status" value="1"/>
</dbReference>
<dbReference type="Pfam" id="PF01849">
    <property type="entry name" value="NAC"/>
    <property type="match status" value="1"/>
</dbReference>
<dbReference type="Pfam" id="PF19026">
    <property type="entry name" value="UBA_HYPK"/>
    <property type="match status" value="1"/>
</dbReference>
<dbReference type="SMART" id="SM01407">
    <property type="entry name" value="NAC"/>
    <property type="match status" value="1"/>
</dbReference>
<dbReference type="SUPFAM" id="SSF46934">
    <property type="entry name" value="UBA-like"/>
    <property type="match status" value="1"/>
</dbReference>
<dbReference type="PROSITE" id="PS51151">
    <property type="entry name" value="NAC_AB"/>
    <property type="match status" value="1"/>
</dbReference>
<accession>O30024</accession>
<reference key="1">
    <citation type="journal article" date="1997" name="Nature">
        <title>The complete genome sequence of the hyperthermophilic, sulphate-reducing archaeon Archaeoglobus fulgidus.</title>
        <authorList>
            <person name="Klenk H.-P."/>
            <person name="Clayton R.A."/>
            <person name="Tomb J.-F."/>
            <person name="White O."/>
            <person name="Nelson K.E."/>
            <person name="Ketchum K.A."/>
            <person name="Dodson R.J."/>
            <person name="Gwinn M.L."/>
            <person name="Hickey E.K."/>
            <person name="Peterson J.D."/>
            <person name="Richardson D.L."/>
            <person name="Kerlavage A.R."/>
            <person name="Graham D.E."/>
            <person name="Kyrpides N.C."/>
            <person name="Fleischmann R.D."/>
            <person name="Quackenbush J."/>
            <person name="Lee N.H."/>
            <person name="Sutton G.G."/>
            <person name="Gill S.R."/>
            <person name="Kirkness E.F."/>
            <person name="Dougherty B.A."/>
            <person name="McKenney K."/>
            <person name="Adams M.D."/>
            <person name="Loftus B.J."/>
            <person name="Peterson S.N."/>
            <person name="Reich C.I."/>
            <person name="McNeil L.K."/>
            <person name="Badger J.H."/>
            <person name="Glodek A."/>
            <person name="Zhou L."/>
            <person name="Overbeek R."/>
            <person name="Gocayne J.D."/>
            <person name="Weidman J.F."/>
            <person name="McDonald L.A."/>
            <person name="Utterback T.R."/>
            <person name="Cotton M.D."/>
            <person name="Spriggs T."/>
            <person name="Artiach P."/>
            <person name="Kaine B.P."/>
            <person name="Sykes S.M."/>
            <person name="Sadow P.W."/>
            <person name="D'Andrea K.P."/>
            <person name="Bowman C."/>
            <person name="Fujii C."/>
            <person name="Garland S.A."/>
            <person name="Mason T.M."/>
            <person name="Olsen G.J."/>
            <person name="Fraser C.M."/>
            <person name="Smith H.O."/>
            <person name="Woese C.R."/>
            <person name="Venter J.C."/>
        </authorList>
    </citation>
    <scope>NUCLEOTIDE SEQUENCE [LARGE SCALE GENOMIC DNA]</scope>
    <source>
        <strain>ATCC 49558 / DSM 4304 / JCM 9628 / NBRC 100126 / VC-16</strain>
    </source>
</reference>
<comment type="function">
    <text evidence="1">Contacts the emerging nascent chain on the ribosome.</text>
</comment>
<comment type="subunit">
    <text evidence="1">Homodimer. Interacts with the ribosome. Binds ribosomal RNA.</text>
</comment>
<comment type="similarity">
    <text evidence="1">Belongs to the NAC-alpha family.</text>
</comment>
<sequence>MLPMNPKQMKKMMKQMGIEMEELDAEEVIIRTSDEELIFRNPNVSKISARGVETFQIVGEYEVVKRPPKISEDDIKLIMEQANVDEETARRALEEAGGDLAEALMKLQE</sequence>
<keyword id="KW-0653">Protein transport</keyword>
<keyword id="KW-1185">Reference proteome</keyword>
<keyword id="KW-0694">RNA-binding</keyword>
<keyword id="KW-0813">Transport</keyword>
<protein>
    <recommendedName>
        <fullName evidence="1">Nascent polypeptide-associated complex protein</fullName>
    </recommendedName>
</protein>